<keyword id="KW-0238">DNA-binding</keyword>
<keyword id="KW-0371">Homeobox</keyword>
<keyword id="KW-0539">Nucleus</keyword>
<keyword id="KW-1185">Reference proteome</keyword>
<keyword id="KW-0804">Transcription</keyword>
<keyword id="KW-0805">Transcription regulation</keyword>
<dbReference type="EMBL" id="U35427">
    <property type="protein sequence ID" value="AAA97404.1"/>
    <property type="molecule type" value="mRNA"/>
</dbReference>
<dbReference type="EMBL" id="AE013599">
    <property type="protein sequence ID" value="AAF58968.1"/>
    <property type="molecule type" value="Genomic_DNA"/>
</dbReference>
<dbReference type="EMBL" id="BT022753">
    <property type="protein sequence ID" value="AAY55169.1"/>
    <property type="molecule type" value="mRNA"/>
</dbReference>
<dbReference type="RefSeq" id="NP_477146.1">
    <property type="nucleotide sequence ID" value="NM_057798.3"/>
</dbReference>
<dbReference type="SMR" id="Q4V5A3"/>
<dbReference type="BioGRID" id="61780">
    <property type="interactions" value="5"/>
</dbReference>
<dbReference type="FunCoup" id="Q4V5A3">
    <property type="interactions" value="73"/>
</dbReference>
<dbReference type="IntAct" id="Q4V5A3">
    <property type="interactions" value="5"/>
</dbReference>
<dbReference type="STRING" id="7227.FBpp0087667"/>
<dbReference type="GlyGen" id="Q4V5A3">
    <property type="glycosylation" value="1 site"/>
</dbReference>
<dbReference type="PaxDb" id="7227-FBpp0087667"/>
<dbReference type="DNASU" id="35942"/>
<dbReference type="EnsemblMetazoa" id="FBtr0088586">
    <property type="protein sequence ID" value="FBpp0087667"/>
    <property type="gene ID" value="FBgn0015561"/>
</dbReference>
<dbReference type="GeneID" id="35942"/>
<dbReference type="KEGG" id="dme:Dmel_CG1650"/>
<dbReference type="UCSC" id="CG1650-RA">
    <property type="organism name" value="d. melanogaster"/>
</dbReference>
<dbReference type="AGR" id="FB:FBgn0015561"/>
<dbReference type="CTD" id="35942"/>
<dbReference type="FlyBase" id="FBgn0015561">
    <property type="gene designation" value="unpg"/>
</dbReference>
<dbReference type="VEuPathDB" id="VectorBase:FBgn0015561"/>
<dbReference type="eggNOG" id="KOG0489">
    <property type="taxonomic scope" value="Eukaryota"/>
</dbReference>
<dbReference type="GeneTree" id="ENSGT00940000154365"/>
<dbReference type="HOGENOM" id="CLU_571441_0_0_1"/>
<dbReference type="InParanoid" id="Q4V5A3"/>
<dbReference type="OMA" id="MSPRNYN"/>
<dbReference type="OrthoDB" id="6159439at2759"/>
<dbReference type="PhylomeDB" id="Q4V5A3"/>
<dbReference type="BioGRID-ORCS" id="35942">
    <property type="hits" value="0 hits in 3 CRISPR screens"/>
</dbReference>
<dbReference type="GenomeRNAi" id="35942"/>
<dbReference type="PRO" id="PR:Q4V5A3"/>
<dbReference type="Proteomes" id="UP000000803">
    <property type="component" value="Chromosome 2R"/>
</dbReference>
<dbReference type="Bgee" id="FBgn0015561">
    <property type="expression patterns" value="Expressed in muscle cell in body wall and 17 other cell types or tissues"/>
</dbReference>
<dbReference type="GO" id="GO:0005634">
    <property type="term" value="C:nucleus"/>
    <property type="evidence" value="ECO:0000314"/>
    <property type="project" value="UniProtKB"/>
</dbReference>
<dbReference type="GO" id="GO:0003700">
    <property type="term" value="F:DNA-binding transcription factor activity"/>
    <property type="evidence" value="ECO:0000315"/>
    <property type="project" value="UniProtKB"/>
</dbReference>
<dbReference type="GO" id="GO:0000981">
    <property type="term" value="F:DNA-binding transcription factor activity, RNA polymerase II-specific"/>
    <property type="evidence" value="ECO:0000318"/>
    <property type="project" value="GO_Central"/>
</dbReference>
<dbReference type="GO" id="GO:0000977">
    <property type="term" value="F:RNA polymerase II transcription regulatory region sequence-specific DNA binding"/>
    <property type="evidence" value="ECO:0000318"/>
    <property type="project" value="GO_Central"/>
</dbReference>
<dbReference type="GO" id="GO:0007420">
    <property type="term" value="P:brain development"/>
    <property type="evidence" value="ECO:0000315"/>
    <property type="project" value="UniProtKB"/>
</dbReference>
<dbReference type="GO" id="GO:0006355">
    <property type="term" value="P:regulation of DNA-templated transcription"/>
    <property type="evidence" value="ECO:0000315"/>
    <property type="project" value="UniProtKB"/>
</dbReference>
<dbReference type="GO" id="GO:0051960">
    <property type="term" value="P:regulation of nervous system development"/>
    <property type="evidence" value="ECO:0000315"/>
    <property type="project" value="UniProtKB"/>
</dbReference>
<dbReference type="GO" id="GO:0006357">
    <property type="term" value="P:regulation of transcription by RNA polymerase II"/>
    <property type="evidence" value="ECO:0000318"/>
    <property type="project" value="GO_Central"/>
</dbReference>
<dbReference type="CDD" id="cd00086">
    <property type="entry name" value="homeodomain"/>
    <property type="match status" value="1"/>
</dbReference>
<dbReference type="FunFam" id="1.10.10.60:FF:000360">
    <property type="entry name" value="Gastrulation brain homeobox"/>
    <property type="match status" value="1"/>
</dbReference>
<dbReference type="Gene3D" id="1.10.10.60">
    <property type="entry name" value="Homeodomain-like"/>
    <property type="match status" value="1"/>
</dbReference>
<dbReference type="InterPro" id="IPR042982">
    <property type="entry name" value="GBX-1/2"/>
</dbReference>
<dbReference type="InterPro" id="IPR001356">
    <property type="entry name" value="HD"/>
</dbReference>
<dbReference type="InterPro" id="IPR020479">
    <property type="entry name" value="HD_metazoa"/>
</dbReference>
<dbReference type="InterPro" id="IPR017970">
    <property type="entry name" value="Homeobox_CS"/>
</dbReference>
<dbReference type="InterPro" id="IPR009057">
    <property type="entry name" value="Homeodomain-like_sf"/>
</dbReference>
<dbReference type="PANTHER" id="PTHR24334">
    <property type="entry name" value="HOMEOBOX PROTEIN GBX"/>
    <property type="match status" value="1"/>
</dbReference>
<dbReference type="PANTHER" id="PTHR24334:SF0">
    <property type="entry name" value="HOMEOBOX PROTEIN UNPLUGGED"/>
    <property type="match status" value="1"/>
</dbReference>
<dbReference type="Pfam" id="PF00046">
    <property type="entry name" value="Homeodomain"/>
    <property type="match status" value="1"/>
</dbReference>
<dbReference type="PRINTS" id="PR00024">
    <property type="entry name" value="HOMEOBOX"/>
</dbReference>
<dbReference type="SMART" id="SM00389">
    <property type="entry name" value="HOX"/>
    <property type="match status" value="1"/>
</dbReference>
<dbReference type="SUPFAM" id="SSF46689">
    <property type="entry name" value="Homeodomain-like"/>
    <property type="match status" value="1"/>
</dbReference>
<dbReference type="PROSITE" id="PS00027">
    <property type="entry name" value="HOMEOBOX_1"/>
    <property type="match status" value="1"/>
</dbReference>
<dbReference type="PROSITE" id="PS50071">
    <property type="entry name" value="HOMEOBOX_2"/>
    <property type="match status" value="1"/>
</dbReference>
<organism>
    <name type="scientific">Drosophila melanogaster</name>
    <name type="common">Fruit fly</name>
    <dbReference type="NCBI Taxonomy" id="7227"/>
    <lineage>
        <taxon>Eukaryota</taxon>
        <taxon>Metazoa</taxon>
        <taxon>Ecdysozoa</taxon>
        <taxon>Arthropoda</taxon>
        <taxon>Hexapoda</taxon>
        <taxon>Insecta</taxon>
        <taxon>Pterygota</taxon>
        <taxon>Neoptera</taxon>
        <taxon>Endopterygota</taxon>
        <taxon>Diptera</taxon>
        <taxon>Brachycera</taxon>
        <taxon>Muscomorpha</taxon>
        <taxon>Ephydroidea</taxon>
        <taxon>Drosophilidae</taxon>
        <taxon>Drosophila</taxon>
        <taxon>Sophophora</taxon>
    </lineage>
</organism>
<protein>
    <recommendedName>
        <fullName>Homeobox protein unplugged</fullName>
    </recommendedName>
</protein>
<gene>
    <name evidence="10 11" type="primary">unpg</name>
    <name evidence="6" type="synonym">unp</name>
    <name type="ORF">CG1650</name>
</gene>
<comment type="function">
    <text evidence="4 5">Plays a regulatory role in neural branching of the tracheae: segment-specific aspects of these neural branching patterns appear to be generated by homeotic regulation of expression. May have a role with oc/otd in the postembryonic development of the brain.</text>
</comment>
<comment type="subcellular location">
    <subcellularLocation>
        <location evidence="1 5">Nucleus</location>
    </subcellularLocation>
    <text evidence="5">In tracheal precursor cells as they migrate and extend.</text>
</comment>
<comment type="tissue specificity">
    <text evidence="4 5">Expressed in the neuroectodermal and mesectodermal cells at the ventral midline of stage 8 embryos, Subsequently, expression domains in the CNS widen and have their most anterior border in the posterior deutocerebrum. Oc/otd and unpg are mutual repressors at the interface of their brain-specific expression domains. Expression fades during germ band retraction and is then restricted to subset of cells by stage 14. Expressed in the founder cells of the cerebral branch within the first tracheal metamere. Outside the CNS, expression is seen in two clusters of ectodermal cells located laterally within the labial and first thoracic segments of stage 9 embryos. By stage 13, the expression is detected in a few cells close to the dorsal midline of the embryos.</text>
</comment>
<comment type="developmental stage">
    <text evidence="5">First detected in 4 hours embryos, expression persists throughout embryogenesis, levels drop during larval stages and then increase again during pupal and adult stages.</text>
</comment>
<comment type="disruption phenotype">
    <text evidence="5">Embryos display segmentally repeated ganglionic branches that stall and fail to penetrate the CNS and the segment-specific cerebral branch and associated cerebral anastomosis fail to form.</text>
</comment>
<sequence length="485" mass="52230">MERPALLQNGEIGTMESPTTRLASKPFPKPFSIESLIANQTPATATPPSPPEERDQEQEAEQEQELSARAMVASSALGLTQFPLYNPWLHGYFAQNHERLTHLIAGGCYLPSSPAGHPAAQQPQAQAQPQPPPPHPPTHALEKQLPPTLPHPLDTRFLPFNPAAAGVAPTDLSYRRLAELMNQDYVHSLSVHARLQHMAAAGRMHEDQANPGMAQLQEPTPPQAHSSPAKSGSHSPMEPALDVGMDEDFECSGDSCSDISLTMSPRNYNGEMDKSRNGAYTNSDSEDCSDDEGAQSRHEGGGMGGKDSQGNGSSSNSKSRRRRTAFTSEQLLELEREFHAKKYLSLTERSQIATSLKLSEVQVKIWFQNRRAKWKRVKAGLTSHGLGRNGTTSGTKIVVPIPVHVNRFAVRSQHQQLEKMCLSGPKPDLRKKLSAEAIGGFEKFSGSTNASSPSGGPVGLGVGVGVGVGVGLGVSTPLSLARSIY</sequence>
<reference evidence="7 8" key="1">
    <citation type="journal article" date="1995" name="Development">
        <title>Control of Drosophila tracheal branching by the novel homeodomain gene unplugged, a regulatory target for genes of the bithorax complex.</title>
        <authorList>
            <person name="Chiang C."/>
            <person name="Young K.E."/>
            <person name="Beachy P.A."/>
        </authorList>
    </citation>
    <scope>NUCLEOTIDE SEQUENCE [MRNA]</scope>
    <scope>FUNCTION</scope>
    <scope>SUBCELLULAR LOCATION</scope>
    <scope>TISSUE SPECIFICITY</scope>
    <scope>DEVELOPMENTAL STAGE</scope>
    <scope>DISRUPTION PHENOTYPE</scope>
</reference>
<reference evidence="9" key="2">
    <citation type="journal article" date="2000" name="Science">
        <title>The genome sequence of Drosophila melanogaster.</title>
        <authorList>
            <person name="Adams M.D."/>
            <person name="Celniker S.E."/>
            <person name="Holt R.A."/>
            <person name="Evans C.A."/>
            <person name="Gocayne J.D."/>
            <person name="Amanatides P.G."/>
            <person name="Scherer S.E."/>
            <person name="Li P.W."/>
            <person name="Hoskins R.A."/>
            <person name="Galle R.F."/>
            <person name="George R.A."/>
            <person name="Lewis S.E."/>
            <person name="Richards S."/>
            <person name="Ashburner M."/>
            <person name="Henderson S.N."/>
            <person name="Sutton G.G."/>
            <person name="Wortman J.R."/>
            <person name="Yandell M.D."/>
            <person name="Zhang Q."/>
            <person name="Chen L.X."/>
            <person name="Brandon R.C."/>
            <person name="Rogers Y.-H.C."/>
            <person name="Blazej R.G."/>
            <person name="Champe M."/>
            <person name="Pfeiffer B.D."/>
            <person name="Wan K.H."/>
            <person name="Doyle C."/>
            <person name="Baxter E.G."/>
            <person name="Helt G."/>
            <person name="Nelson C.R."/>
            <person name="Miklos G.L.G."/>
            <person name="Abril J.F."/>
            <person name="Agbayani A."/>
            <person name="An H.-J."/>
            <person name="Andrews-Pfannkoch C."/>
            <person name="Baldwin D."/>
            <person name="Ballew R.M."/>
            <person name="Basu A."/>
            <person name="Baxendale J."/>
            <person name="Bayraktaroglu L."/>
            <person name="Beasley E.M."/>
            <person name="Beeson K.Y."/>
            <person name="Benos P.V."/>
            <person name="Berman B.P."/>
            <person name="Bhandari D."/>
            <person name="Bolshakov S."/>
            <person name="Borkova D."/>
            <person name="Botchan M.R."/>
            <person name="Bouck J."/>
            <person name="Brokstein P."/>
            <person name="Brottier P."/>
            <person name="Burtis K.C."/>
            <person name="Busam D.A."/>
            <person name="Butler H."/>
            <person name="Cadieu E."/>
            <person name="Center A."/>
            <person name="Chandra I."/>
            <person name="Cherry J.M."/>
            <person name="Cawley S."/>
            <person name="Dahlke C."/>
            <person name="Davenport L.B."/>
            <person name="Davies P."/>
            <person name="de Pablos B."/>
            <person name="Delcher A."/>
            <person name="Deng Z."/>
            <person name="Mays A.D."/>
            <person name="Dew I."/>
            <person name="Dietz S.M."/>
            <person name="Dodson K."/>
            <person name="Doup L.E."/>
            <person name="Downes M."/>
            <person name="Dugan-Rocha S."/>
            <person name="Dunkov B.C."/>
            <person name="Dunn P."/>
            <person name="Durbin K.J."/>
            <person name="Evangelista C.C."/>
            <person name="Ferraz C."/>
            <person name="Ferriera S."/>
            <person name="Fleischmann W."/>
            <person name="Fosler C."/>
            <person name="Gabrielian A.E."/>
            <person name="Garg N.S."/>
            <person name="Gelbart W.M."/>
            <person name="Glasser K."/>
            <person name="Glodek A."/>
            <person name="Gong F."/>
            <person name="Gorrell J.H."/>
            <person name="Gu Z."/>
            <person name="Guan P."/>
            <person name="Harris M."/>
            <person name="Harris N.L."/>
            <person name="Harvey D.A."/>
            <person name="Heiman T.J."/>
            <person name="Hernandez J.R."/>
            <person name="Houck J."/>
            <person name="Hostin D."/>
            <person name="Houston K.A."/>
            <person name="Howland T.J."/>
            <person name="Wei M.-H."/>
            <person name="Ibegwam C."/>
            <person name="Jalali M."/>
            <person name="Kalush F."/>
            <person name="Karpen G.H."/>
            <person name="Ke Z."/>
            <person name="Kennison J.A."/>
            <person name="Ketchum K.A."/>
            <person name="Kimmel B.E."/>
            <person name="Kodira C.D."/>
            <person name="Kraft C.L."/>
            <person name="Kravitz S."/>
            <person name="Kulp D."/>
            <person name="Lai Z."/>
            <person name="Lasko P."/>
            <person name="Lei Y."/>
            <person name="Levitsky A.A."/>
            <person name="Li J.H."/>
            <person name="Li Z."/>
            <person name="Liang Y."/>
            <person name="Lin X."/>
            <person name="Liu X."/>
            <person name="Mattei B."/>
            <person name="McIntosh T.C."/>
            <person name="McLeod M.P."/>
            <person name="McPherson D."/>
            <person name="Merkulov G."/>
            <person name="Milshina N.V."/>
            <person name="Mobarry C."/>
            <person name="Morris J."/>
            <person name="Moshrefi A."/>
            <person name="Mount S.M."/>
            <person name="Moy M."/>
            <person name="Murphy B."/>
            <person name="Murphy L."/>
            <person name="Muzny D.M."/>
            <person name="Nelson D.L."/>
            <person name="Nelson D.R."/>
            <person name="Nelson K.A."/>
            <person name="Nixon K."/>
            <person name="Nusskern D.R."/>
            <person name="Pacleb J.M."/>
            <person name="Palazzolo M."/>
            <person name="Pittman G.S."/>
            <person name="Pan S."/>
            <person name="Pollard J."/>
            <person name="Puri V."/>
            <person name="Reese M.G."/>
            <person name="Reinert K."/>
            <person name="Remington K."/>
            <person name="Saunders R.D.C."/>
            <person name="Scheeler F."/>
            <person name="Shen H."/>
            <person name="Shue B.C."/>
            <person name="Siden-Kiamos I."/>
            <person name="Simpson M."/>
            <person name="Skupski M.P."/>
            <person name="Smith T.J."/>
            <person name="Spier E."/>
            <person name="Spradling A.C."/>
            <person name="Stapleton M."/>
            <person name="Strong R."/>
            <person name="Sun E."/>
            <person name="Svirskas R."/>
            <person name="Tector C."/>
            <person name="Turner R."/>
            <person name="Venter E."/>
            <person name="Wang A.H."/>
            <person name="Wang X."/>
            <person name="Wang Z.-Y."/>
            <person name="Wassarman D.A."/>
            <person name="Weinstock G.M."/>
            <person name="Weissenbach J."/>
            <person name="Williams S.M."/>
            <person name="Woodage T."/>
            <person name="Worley K.C."/>
            <person name="Wu D."/>
            <person name="Yang S."/>
            <person name="Yao Q.A."/>
            <person name="Ye J."/>
            <person name="Yeh R.-F."/>
            <person name="Zaveri J.S."/>
            <person name="Zhan M."/>
            <person name="Zhang G."/>
            <person name="Zhao Q."/>
            <person name="Zheng L."/>
            <person name="Zheng X.H."/>
            <person name="Zhong F.N."/>
            <person name="Zhong W."/>
            <person name="Zhou X."/>
            <person name="Zhu S.C."/>
            <person name="Zhu X."/>
            <person name="Smith H.O."/>
            <person name="Gibbs R.A."/>
            <person name="Myers E.W."/>
            <person name="Rubin G.M."/>
            <person name="Venter J.C."/>
        </authorList>
    </citation>
    <scope>NUCLEOTIDE SEQUENCE [LARGE SCALE GENOMIC DNA]</scope>
    <source>
        <strain evidence="3">Berkeley</strain>
    </source>
</reference>
<reference evidence="7 9" key="3">
    <citation type="journal article" date="2002" name="Genome Biol.">
        <title>Annotation of the Drosophila melanogaster euchromatic genome: a systematic review.</title>
        <authorList>
            <person name="Misra S."/>
            <person name="Crosby M.A."/>
            <person name="Mungall C.J."/>
            <person name="Matthews B.B."/>
            <person name="Campbell K.S."/>
            <person name="Hradecky P."/>
            <person name="Huang Y."/>
            <person name="Kaminker J.S."/>
            <person name="Millburn G.H."/>
            <person name="Prochnik S.E."/>
            <person name="Smith C.D."/>
            <person name="Tupy J.L."/>
            <person name="Whitfield E.J."/>
            <person name="Bayraktaroglu L."/>
            <person name="Berman B.P."/>
            <person name="Bettencourt B.R."/>
            <person name="Celniker S.E."/>
            <person name="de Grey A.D.N.J."/>
            <person name="Drysdale R.A."/>
            <person name="Harris N.L."/>
            <person name="Richter J."/>
            <person name="Russo S."/>
            <person name="Schroeder A.J."/>
            <person name="Shu S.Q."/>
            <person name="Stapleton M."/>
            <person name="Yamada C."/>
            <person name="Ashburner M."/>
            <person name="Gelbart W.M."/>
            <person name="Rubin G.M."/>
            <person name="Lewis S.E."/>
        </authorList>
    </citation>
    <scope>GENOME REANNOTATION</scope>
    <source>
        <strain>Berkeley</strain>
    </source>
</reference>
<reference evidence="10" key="4">
    <citation type="submission" date="2005-05" db="EMBL/GenBank/DDBJ databases">
        <authorList>
            <person name="Stapleton M."/>
            <person name="Carlson J.W."/>
            <person name="Chavez C."/>
            <person name="Frise E."/>
            <person name="George R.A."/>
            <person name="Pacleb J.M."/>
            <person name="Park S."/>
            <person name="Wan K.H."/>
            <person name="Yu C."/>
            <person name="Celniker S.E."/>
        </authorList>
    </citation>
    <scope>NUCLEOTIDE SEQUENCE [LARGE SCALE MRNA]</scope>
    <source>
        <strain>Berkeley</strain>
    </source>
</reference>
<reference evidence="7" key="5">
    <citation type="journal article" date="2003" name="Development">
        <title>An urbilaterian origin of the tripartite brain: developmental genetic insights from Drosophila.</title>
        <authorList>
            <person name="Hirth F."/>
            <person name="Kammermeier L."/>
            <person name="Frei E."/>
            <person name="Walldorf U."/>
            <person name="Noll M."/>
            <person name="Reichert H."/>
        </authorList>
    </citation>
    <scope>FUNCTION</scope>
    <scope>TISSUE SPECIFICITY</scope>
</reference>
<evidence type="ECO:0000255" key="1">
    <source>
        <dbReference type="PROSITE-ProRule" id="PRU00108"/>
    </source>
</evidence>
<evidence type="ECO:0000256" key="2">
    <source>
        <dbReference type="SAM" id="MobiDB-lite"/>
    </source>
</evidence>
<evidence type="ECO:0000269" key="3">
    <source>
    </source>
</evidence>
<evidence type="ECO:0000269" key="4">
    <source>
    </source>
</evidence>
<evidence type="ECO:0000269" key="5">
    <source>
    </source>
</evidence>
<evidence type="ECO:0000303" key="6">
    <source>
    </source>
</evidence>
<evidence type="ECO:0000305" key="7"/>
<evidence type="ECO:0000312" key="8">
    <source>
        <dbReference type="EMBL" id="AAA97404.1"/>
    </source>
</evidence>
<evidence type="ECO:0000312" key="9">
    <source>
        <dbReference type="EMBL" id="AAF58968.1"/>
    </source>
</evidence>
<evidence type="ECO:0000312" key="10">
    <source>
        <dbReference type="EMBL" id="AAY55169.1"/>
    </source>
</evidence>
<evidence type="ECO:0000312" key="11">
    <source>
        <dbReference type="FlyBase" id="FBgn0015561"/>
    </source>
</evidence>
<feature type="chain" id="PRO_0000299499" description="Homeobox protein unplugged">
    <location>
        <begin position="1"/>
        <end position="485"/>
    </location>
</feature>
<feature type="DNA-binding region" description="Homeobox" evidence="1">
    <location>
        <begin position="319"/>
        <end position="378"/>
    </location>
</feature>
<feature type="region of interest" description="Disordered" evidence="2">
    <location>
        <begin position="1"/>
        <end position="65"/>
    </location>
</feature>
<feature type="region of interest" description="Disordered" evidence="2">
    <location>
        <begin position="114"/>
        <end position="157"/>
    </location>
</feature>
<feature type="region of interest" description="Disordered" evidence="2">
    <location>
        <begin position="212"/>
        <end position="325"/>
    </location>
</feature>
<feature type="compositionally biased region" description="Acidic residues" evidence="2">
    <location>
        <begin position="54"/>
        <end position="64"/>
    </location>
</feature>
<feature type="compositionally biased region" description="Low complexity" evidence="2">
    <location>
        <begin position="114"/>
        <end position="128"/>
    </location>
</feature>
<feature type="compositionally biased region" description="Polar residues" evidence="2">
    <location>
        <begin position="223"/>
        <end position="234"/>
    </location>
</feature>
<feature type="compositionally biased region" description="Polar residues" evidence="2">
    <location>
        <begin position="254"/>
        <end position="267"/>
    </location>
</feature>
<feature type="compositionally biased region" description="Acidic residues" evidence="2">
    <location>
        <begin position="284"/>
        <end position="293"/>
    </location>
</feature>
<feature type="compositionally biased region" description="Low complexity" evidence="2">
    <location>
        <begin position="308"/>
        <end position="317"/>
    </location>
</feature>
<feature type="sequence conflict" description="In Ref. 1; AAA97404." evidence="7" ref="1">
    <original>G</original>
    <variation>A</variation>
    <location>
        <position position="107"/>
    </location>
</feature>
<feature type="sequence conflict" description="In Ref. 1; AAA97404." evidence="7" ref="1">
    <original>A</original>
    <variation>P</variation>
    <location>
        <position position="481"/>
    </location>
</feature>
<accession>Q4V5A3</accession>
<accession>Q24136</accession>
<name>UNPG_DROME</name>
<proteinExistence type="evidence at transcript level"/>